<organism>
    <name type="scientific">Citrifermentans bemidjiense (strain ATCC BAA-1014 / DSM 16622 / JCM 12645 / Bem)</name>
    <name type="common">Geobacter bemidjiensis</name>
    <dbReference type="NCBI Taxonomy" id="404380"/>
    <lineage>
        <taxon>Bacteria</taxon>
        <taxon>Pseudomonadati</taxon>
        <taxon>Thermodesulfobacteriota</taxon>
        <taxon>Desulfuromonadia</taxon>
        <taxon>Geobacterales</taxon>
        <taxon>Geobacteraceae</taxon>
        <taxon>Citrifermentans</taxon>
    </lineage>
</organism>
<reference key="1">
    <citation type="submission" date="2008-07" db="EMBL/GenBank/DDBJ databases">
        <title>Complete sequence of Geobacter bemidjiensis BEM.</title>
        <authorList>
            <consortium name="US DOE Joint Genome Institute"/>
            <person name="Lucas S."/>
            <person name="Copeland A."/>
            <person name="Lapidus A."/>
            <person name="Glavina del Rio T."/>
            <person name="Dalin E."/>
            <person name="Tice H."/>
            <person name="Bruce D."/>
            <person name="Goodwin L."/>
            <person name="Pitluck S."/>
            <person name="Kiss H."/>
            <person name="Brettin T."/>
            <person name="Detter J.C."/>
            <person name="Han C."/>
            <person name="Kuske C.R."/>
            <person name="Schmutz J."/>
            <person name="Larimer F."/>
            <person name="Land M."/>
            <person name="Hauser L."/>
            <person name="Kyrpides N."/>
            <person name="Lykidis A."/>
            <person name="Lovley D."/>
            <person name="Richardson P."/>
        </authorList>
    </citation>
    <scope>NUCLEOTIDE SEQUENCE [LARGE SCALE GENOMIC DNA]</scope>
    <source>
        <strain>ATCC BAA-1014 / DSM 16622 / JCM 12645 / Bem</strain>
    </source>
</reference>
<dbReference type="EMBL" id="CP001124">
    <property type="protein sequence ID" value="ACH40498.1"/>
    <property type="molecule type" value="Genomic_DNA"/>
</dbReference>
<dbReference type="RefSeq" id="WP_012531934.1">
    <property type="nucleotide sequence ID" value="NC_011146.1"/>
</dbReference>
<dbReference type="SMR" id="B5EC42"/>
<dbReference type="STRING" id="404380.Gbem_3505"/>
<dbReference type="KEGG" id="gbm:Gbem_3505"/>
<dbReference type="eggNOG" id="COG0443">
    <property type="taxonomic scope" value="Bacteria"/>
</dbReference>
<dbReference type="HOGENOM" id="CLU_005965_2_1_7"/>
<dbReference type="OrthoDB" id="9766019at2"/>
<dbReference type="Proteomes" id="UP000008825">
    <property type="component" value="Chromosome"/>
</dbReference>
<dbReference type="GO" id="GO:0005524">
    <property type="term" value="F:ATP binding"/>
    <property type="evidence" value="ECO:0007669"/>
    <property type="project" value="UniProtKB-UniRule"/>
</dbReference>
<dbReference type="GO" id="GO:0140662">
    <property type="term" value="F:ATP-dependent protein folding chaperone"/>
    <property type="evidence" value="ECO:0007669"/>
    <property type="project" value="InterPro"/>
</dbReference>
<dbReference type="GO" id="GO:0051082">
    <property type="term" value="F:unfolded protein binding"/>
    <property type="evidence" value="ECO:0007669"/>
    <property type="project" value="InterPro"/>
</dbReference>
<dbReference type="CDD" id="cd10234">
    <property type="entry name" value="ASKHA_NBD_HSP70_DnaK-like"/>
    <property type="match status" value="1"/>
</dbReference>
<dbReference type="FunFam" id="2.60.34.10:FF:000014">
    <property type="entry name" value="Chaperone protein DnaK HSP70"/>
    <property type="match status" value="1"/>
</dbReference>
<dbReference type="FunFam" id="3.30.420.40:FF:000020">
    <property type="entry name" value="Chaperone protein HscA homolog"/>
    <property type="match status" value="1"/>
</dbReference>
<dbReference type="FunFam" id="3.30.30.30:FF:000003">
    <property type="entry name" value="Heat shock protein 9"/>
    <property type="match status" value="1"/>
</dbReference>
<dbReference type="FunFam" id="1.20.1270.10:FF:000001">
    <property type="entry name" value="Molecular chaperone DnaK"/>
    <property type="match status" value="1"/>
</dbReference>
<dbReference type="FunFam" id="3.30.420.40:FF:000004">
    <property type="entry name" value="Molecular chaperone DnaK"/>
    <property type="match status" value="1"/>
</dbReference>
<dbReference type="FunFam" id="3.90.640.10:FF:000003">
    <property type="entry name" value="Molecular chaperone DnaK"/>
    <property type="match status" value="1"/>
</dbReference>
<dbReference type="Gene3D" id="1.20.1270.10">
    <property type="match status" value="1"/>
</dbReference>
<dbReference type="Gene3D" id="3.30.420.40">
    <property type="match status" value="2"/>
</dbReference>
<dbReference type="Gene3D" id="3.90.640.10">
    <property type="entry name" value="Actin, Chain A, domain 4"/>
    <property type="match status" value="1"/>
</dbReference>
<dbReference type="Gene3D" id="2.60.34.10">
    <property type="entry name" value="Substrate Binding Domain Of DNAk, Chain A, domain 1"/>
    <property type="match status" value="1"/>
</dbReference>
<dbReference type="HAMAP" id="MF_00332">
    <property type="entry name" value="DnaK"/>
    <property type="match status" value="1"/>
</dbReference>
<dbReference type="InterPro" id="IPR043129">
    <property type="entry name" value="ATPase_NBD"/>
</dbReference>
<dbReference type="InterPro" id="IPR012725">
    <property type="entry name" value="Chaperone_DnaK"/>
</dbReference>
<dbReference type="InterPro" id="IPR018181">
    <property type="entry name" value="Heat_shock_70_CS"/>
</dbReference>
<dbReference type="InterPro" id="IPR029048">
    <property type="entry name" value="HSP70_C_sf"/>
</dbReference>
<dbReference type="InterPro" id="IPR029047">
    <property type="entry name" value="HSP70_peptide-bd_sf"/>
</dbReference>
<dbReference type="InterPro" id="IPR013126">
    <property type="entry name" value="Hsp_70_fam"/>
</dbReference>
<dbReference type="NCBIfam" id="NF001413">
    <property type="entry name" value="PRK00290.1"/>
    <property type="match status" value="1"/>
</dbReference>
<dbReference type="NCBIfam" id="NF003520">
    <property type="entry name" value="PRK05183.1"/>
    <property type="match status" value="1"/>
</dbReference>
<dbReference type="NCBIfam" id="TIGR02350">
    <property type="entry name" value="prok_dnaK"/>
    <property type="match status" value="1"/>
</dbReference>
<dbReference type="PANTHER" id="PTHR19375">
    <property type="entry name" value="HEAT SHOCK PROTEIN 70KDA"/>
    <property type="match status" value="1"/>
</dbReference>
<dbReference type="Pfam" id="PF00012">
    <property type="entry name" value="HSP70"/>
    <property type="match status" value="1"/>
</dbReference>
<dbReference type="PRINTS" id="PR00301">
    <property type="entry name" value="HEATSHOCK70"/>
</dbReference>
<dbReference type="SUPFAM" id="SSF53067">
    <property type="entry name" value="Actin-like ATPase domain"/>
    <property type="match status" value="2"/>
</dbReference>
<dbReference type="SUPFAM" id="SSF100934">
    <property type="entry name" value="Heat shock protein 70kD (HSP70), C-terminal subdomain"/>
    <property type="match status" value="1"/>
</dbReference>
<dbReference type="SUPFAM" id="SSF100920">
    <property type="entry name" value="Heat shock protein 70kD (HSP70), peptide-binding domain"/>
    <property type="match status" value="1"/>
</dbReference>
<dbReference type="PROSITE" id="PS00297">
    <property type="entry name" value="HSP70_1"/>
    <property type="match status" value="1"/>
</dbReference>
<dbReference type="PROSITE" id="PS00329">
    <property type="entry name" value="HSP70_2"/>
    <property type="match status" value="1"/>
</dbReference>
<dbReference type="PROSITE" id="PS01036">
    <property type="entry name" value="HSP70_3"/>
    <property type="match status" value="1"/>
</dbReference>
<feature type="chain" id="PRO_1000119708" description="Chaperone protein DnaK">
    <location>
        <begin position="1"/>
        <end position="640"/>
    </location>
</feature>
<feature type="region of interest" description="Disordered" evidence="2">
    <location>
        <begin position="600"/>
        <end position="640"/>
    </location>
</feature>
<feature type="compositionally biased region" description="Acidic residues" evidence="2">
    <location>
        <begin position="630"/>
        <end position="640"/>
    </location>
</feature>
<feature type="modified residue" description="Phosphothreonine; by autocatalysis" evidence="1">
    <location>
        <position position="198"/>
    </location>
</feature>
<evidence type="ECO:0000255" key="1">
    <source>
        <dbReference type="HAMAP-Rule" id="MF_00332"/>
    </source>
</evidence>
<evidence type="ECO:0000256" key="2">
    <source>
        <dbReference type="SAM" id="MobiDB-lite"/>
    </source>
</evidence>
<name>DNAK_CITBB</name>
<gene>
    <name evidence="1" type="primary">dnaK</name>
    <name type="ordered locus">Gbem_3505</name>
</gene>
<sequence length="640" mass="68485">MSRVIGIDLGTTNSCVAVMEGGEPVVIANAEGSRTTPSMIAFAESGERLVGQQAKRQAVTNPENTLYAIKRLIGRKFETEAVKKDIAISPFKIVKADNSDAWVEVRGQKYSPPEISAMVLQKMKKTAEDYLGEAVTDAVITVPAYFDDSQRQATKDAGKIAGLNVLRIINEPTAAALAYGLDKKKDEKIAVFDLGGGTFDVSILELGEGVFEVKSTNGDTFLGGEDFDQKIIDHIADEFKKDQGIDLRGDKMALQRLKEAGEKAKCELSTSLETDINLPFITADASGPKHLTMKLTRAKLESICAELIAKLEGPCRTALKDAGLSASDIDEVILVGGMTRMPIVQKKVQDIFGKLPNRGVNPDEVVAIGAAIQGGVLRGDVKDVLLLDVTPLSLGIETLGGVLTKLIDKNSTIPCRKSQVFSTAADNQPAVSIHVLQGEREMAADNKTLGNFELSGIPAAPRGVPQIEVTFDIDANGIVHVSAKDLGTGKEQSIRITASSGLSKEEVEKMVREAEAHAADDKKKRELIEAKNQADNLIYQTEKSLTEFGDKIDASEKQKIEEGVAALKKALEGSDADEIKKASDSLMQASHKLAEAVYAKTQGAGAEGGEQPHGEQEAGGAAKGEKVVDADFEEVKDDKK</sequence>
<proteinExistence type="inferred from homology"/>
<protein>
    <recommendedName>
        <fullName evidence="1">Chaperone protein DnaK</fullName>
    </recommendedName>
    <alternativeName>
        <fullName evidence="1">HSP70</fullName>
    </alternativeName>
    <alternativeName>
        <fullName evidence="1">Heat shock 70 kDa protein</fullName>
    </alternativeName>
    <alternativeName>
        <fullName evidence="1">Heat shock protein 70</fullName>
    </alternativeName>
</protein>
<comment type="function">
    <text evidence="1">Acts as a chaperone.</text>
</comment>
<comment type="induction">
    <text evidence="1">By stress conditions e.g. heat shock.</text>
</comment>
<comment type="similarity">
    <text evidence="1">Belongs to the heat shock protein 70 family.</text>
</comment>
<accession>B5EC42</accession>
<keyword id="KW-0067">ATP-binding</keyword>
<keyword id="KW-0143">Chaperone</keyword>
<keyword id="KW-0547">Nucleotide-binding</keyword>
<keyword id="KW-0597">Phosphoprotein</keyword>
<keyword id="KW-1185">Reference proteome</keyword>
<keyword id="KW-0346">Stress response</keyword>